<protein>
    <recommendedName>
        <fullName evidence="1">ATP-dependent dethiobiotin synthetase BioD</fullName>
        <ecNumber evidence="1">6.3.3.3</ecNumber>
    </recommendedName>
    <alternativeName>
        <fullName evidence="1">DTB synthetase</fullName>
        <shortName evidence="1">DTBS</shortName>
    </alternativeName>
    <alternativeName>
        <fullName evidence="1">Dethiobiotin synthase</fullName>
    </alternativeName>
</protein>
<organism>
    <name type="scientific">Alteromonas mediterranea (strain DSM 17117 / CIP 110805 / LMG 28347 / Deep ecotype)</name>
    <dbReference type="NCBI Taxonomy" id="1774373"/>
    <lineage>
        <taxon>Bacteria</taxon>
        <taxon>Pseudomonadati</taxon>
        <taxon>Pseudomonadota</taxon>
        <taxon>Gammaproteobacteria</taxon>
        <taxon>Alteromonadales</taxon>
        <taxon>Alteromonadaceae</taxon>
        <taxon>Alteromonas/Salinimonas group</taxon>
        <taxon>Alteromonas</taxon>
    </lineage>
</organism>
<sequence>MKQYFVTGTDTEVGKTYVTCQLLRAANNASLTAIGYKPIAAGCELVNGEWVNEDALNIQQASACANGQTLPINEINPIALTPPIAPHIAANEEGVALTHEKIAEGLNALAAYRPDILLMEGAGGWRLPLTIGSDNTPTHYLSDVVKALKMDVILVVGMRLGCLNHALLTAEAIRADGLIIKGWVANDITGNMTRYQENLRSLKAMLPEPLLAEIPYQTGIEAGTLLSAIEQLS</sequence>
<gene>
    <name evidence="1" type="primary">bioD</name>
    <name type="ordered locus">MADE_1007270</name>
</gene>
<feature type="chain" id="PRO_1000119853" description="ATP-dependent dethiobiotin synthetase BioD">
    <location>
        <begin position="1"/>
        <end position="233"/>
    </location>
</feature>
<feature type="active site" evidence="1">
    <location>
        <position position="37"/>
    </location>
</feature>
<feature type="binding site" evidence="1">
    <location>
        <begin position="12"/>
        <end position="17"/>
    </location>
    <ligand>
        <name>ATP</name>
        <dbReference type="ChEBI" id="CHEBI:30616"/>
    </ligand>
</feature>
<feature type="binding site" evidence="1">
    <location>
        <position position="16"/>
    </location>
    <ligand>
        <name>Mg(2+)</name>
        <dbReference type="ChEBI" id="CHEBI:18420"/>
    </ligand>
</feature>
<feature type="binding site" evidence="1">
    <location>
        <position position="54"/>
    </location>
    <ligand>
        <name>ATP</name>
        <dbReference type="ChEBI" id="CHEBI:30616"/>
    </ligand>
</feature>
<feature type="binding site" evidence="1">
    <location>
        <position position="54"/>
    </location>
    <ligand>
        <name>Mg(2+)</name>
        <dbReference type="ChEBI" id="CHEBI:18420"/>
    </ligand>
</feature>
<feature type="binding site" evidence="1">
    <location>
        <begin position="120"/>
        <end position="123"/>
    </location>
    <ligand>
        <name>ATP</name>
        <dbReference type="ChEBI" id="CHEBI:30616"/>
    </ligand>
</feature>
<feature type="binding site" evidence="1">
    <location>
        <position position="120"/>
    </location>
    <ligand>
        <name>Mg(2+)</name>
        <dbReference type="ChEBI" id="CHEBI:18420"/>
    </ligand>
</feature>
<feature type="binding site" evidence="1">
    <location>
        <begin position="186"/>
        <end position="187"/>
    </location>
    <ligand>
        <name>ATP</name>
        <dbReference type="ChEBI" id="CHEBI:30616"/>
    </ligand>
</feature>
<name>BIOD_ALTMD</name>
<proteinExistence type="inferred from homology"/>
<reference key="1">
    <citation type="journal article" date="2008" name="ISME J.">
        <title>Comparative genomics of two ecotypes of the marine planktonic copiotroph Alteromonas macleodii suggests alternative lifestyles associated with different kinds of particulate organic matter.</title>
        <authorList>
            <person name="Ivars-Martinez E."/>
            <person name="Martin-Cuadrado A.-B."/>
            <person name="D'Auria G."/>
            <person name="Mira A."/>
            <person name="Ferriera S."/>
            <person name="Johnson J."/>
            <person name="Friedman R."/>
            <person name="Rodriguez-Valera F."/>
        </authorList>
    </citation>
    <scope>NUCLEOTIDE SEQUENCE [LARGE SCALE GENOMIC DNA]</scope>
    <source>
        <strain>DSM 17117 / CIP 110805 / LMG 28347 / Deep ecotype</strain>
    </source>
</reference>
<dbReference type="EC" id="6.3.3.3" evidence="1"/>
<dbReference type="EMBL" id="CP001103">
    <property type="protein sequence ID" value="AEA97596.1"/>
    <property type="molecule type" value="Genomic_DNA"/>
</dbReference>
<dbReference type="RefSeq" id="WP_012517938.1">
    <property type="nucleotide sequence ID" value="NC_011138.3"/>
</dbReference>
<dbReference type="SMR" id="B4S0P6"/>
<dbReference type="KEGG" id="amc:MADE_1007270"/>
<dbReference type="HOGENOM" id="CLU_072551_0_0_6"/>
<dbReference type="UniPathway" id="UPA00078">
    <property type="reaction ID" value="UER00161"/>
</dbReference>
<dbReference type="Proteomes" id="UP000001870">
    <property type="component" value="Chromosome"/>
</dbReference>
<dbReference type="GO" id="GO:0005829">
    <property type="term" value="C:cytosol"/>
    <property type="evidence" value="ECO:0007669"/>
    <property type="project" value="TreeGrafter"/>
</dbReference>
<dbReference type="GO" id="GO:0005524">
    <property type="term" value="F:ATP binding"/>
    <property type="evidence" value="ECO:0007669"/>
    <property type="project" value="UniProtKB-UniRule"/>
</dbReference>
<dbReference type="GO" id="GO:0004141">
    <property type="term" value="F:dethiobiotin synthase activity"/>
    <property type="evidence" value="ECO:0007669"/>
    <property type="project" value="UniProtKB-UniRule"/>
</dbReference>
<dbReference type="GO" id="GO:0000287">
    <property type="term" value="F:magnesium ion binding"/>
    <property type="evidence" value="ECO:0007669"/>
    <property type="project" value="UniProtKB-UniRule"/>
</dbReference>
<dbReference type="GO" id="GO:0009102">
    <property type="term" value="P:biotin biosynthetic process"/>
    <property type="evidence" value="ECO:0007669"/>
    <property type="project" value="UniProtKB-UniRule"/>
</dbReference>
<dbReference type="CDD" id="cd03109">
    <property type="entry name" value="DTBS"/>
    <property type="match status" value="1"/>
</dbReference>
<dbReference type="FunFam" id="3.40.50.300:FF:000292">
    <property type="entry name" value="ATP-dependent dethiobiotin synthetase BioD"/>
    <property type="match status" value="1"/>
</dbReference>
<dbReference type="Gene3D" id="3.40.50.300">
    <property type="entry name" value="P-loop containing nucleotide triphosphate hydrolases"/>
    <property type="match status" value="1"/>
</dbReference>
<dbReference type="HAMAP" id="MF_00336">
    <property type="entry name" value="BioD"/>
    <property type="match status" value="1"/>
</dbReference>
<dbReference type="InterPro" id="IPR004472">
    <property type="entry name" value="DTB_synth_BioD"/>
</dbReference>
<dbReference type="InterPro" id="IPR027417">
    <property type="entry name" value="P-loop_NTPase"/>
</dbReference>
<dbReference type="NCBIfam" id="TIGR00347">
    <property type="entry name" value="bioD"/>
    <property type="match status" value="1"/>
</dbReference>
<dbReference type="PANTHER" id="PTHR43210">
    <property type="entry name" value="DETHIOBIOTIN SYNTHETASE"/>
    <property type="match status" value="1"/>
</dbReference>
<dbReference type="PANTHER" id="PTHR43210:SF5">
    <property type="entry name" value="DETHIOBIOTIN SYNTHETASE"/>
    <property type="match status" value="1"/>
</dbReference>
<dbReference type="Pfam" id="PF13500">
    <property type="entry name" value="AAA_26"/>
    <property type="match status" value="1"/>
</dbReference>
<dbReference type="PIRSF" id="PIRSF006755">
    <property type="entry name" value="DTB_synth"/>
    <property type="match status" value="1"/>
</dbReference>
<dbReference type="SUPFAM" id="SSF52540">
    <property type="entry name" value="P-loop containing nucleoside triphosphate hydrolases"/>
    <property type="match status" value="1"/>
</dbReference>
<keyword id="KW-0067">ATP-binding</keyword>
<keyword id="KW-0093">Biotin biosynthesis</keyword>
<keyword id="KW-0963">Cytoplasm</keyword>
<keyword id="KW-0436">Ligase</keyword>
<keyword id="KW-0460">Magnesium</keyword>
<keyword id="KW-0479">Metal-binding</keyword>
<keyword id="KW-0547">Nucleotide-binding</keyword>
<evidence type="ECO:0000255" key="1">
    <source>
        <dbReference type="HAMAP-Rule" id="MF_00336"/>
    </source>
</evidence>
<accession>B4S0P6</accession>
<accession>F2G6Q9</accession>
<comment type="function">
    <text evidence="1">Catalyzes a mechanistically unusual reaction, the ATP-dependent insertion of CO2 between the N7 and N8 nitrogen atoms of 7,8-diaminopelargonic acid (DAPA, also called 7,8-diammoniononanoate) to form a ureido ring.</text>
</comment>
<comment type="catalytic activity">
    <reaction evidence="1">
        <text>(7R,8S)-7,8-diammoniononanoate + CO2 + ATP = (4R,5S)-dethiobiotin + ADP + phosphate + 3 H(+)</text>
        <dbReference type="Rhea" id="RHEA:15805"/>
        <dbReference type="ChEBI" id="CHEBI:15378"/>
        <dbReference type="ChEBI" id="CHEBI:16526"/>
        <dbReference type="ChEBI" id="CHEBI:30616"/>
        <dbReference type="ChEBI" id="CHEBI:43474"/>
        <dbReference type="ChEBI" id="CHEBI:149469"/>
        <dbReference type="ChEBI" id="CHEBI:149473"/>
        <dbReference type="ChEBI" id="CHEBI:456216"/>
        <dbReference type="EC" id="6.3.3.3"/>
    </reaction>
</comment>
<comment type="cofactor">
    <cofactor evidence="1">
        <name>Mg(2+)</name>
        <dbReference type="ChEBI" id="CHEBI:18420"/>
    </cofactor>
</comment>
<comment type="pathway">
    <text evidence="1">Cofactor biosynthesis; biotin biosynthesis; biotin from 7,8-diaminononanoate: step 1/2.</text>
</comment>
<comment type="subunit">
    <text evidence="1">Homodimer.</text>
</comment>
<comment type="subcellular location">
    <subcellularLocation>
        <location evidence="1">Cytoplasm</location>
    </subcellularLocation>
</comment>
<comment type="similarity">
    <text evidence="1">Belongs to the dethiobiotin synthetase family.</text>
</comment>